<sequence>MTTSSHHNKGDNSADLYLASQSPRRRELLAQIGVKVAVLSVDVAEQREVGESPAQYVQRLAYDKAMAGAKLAATQPRSLPCLGSDTIVVIENRVLEKPRDEEDGVAMLLALSGQTHQVMTAVAVATEAKQLMRLSVTDVTFREISRAEAIEYWRTGEPADKAGGYGIQGLGAVFVRELKGSYTAVVGLPLFETKTLLDAFEVPVWQNLAP</sequence>
<feature type="chain" id="PRO_0000267417" description="dTTP/UTP pyrophosphatase">
    <location>
        <begin position="1"/>
        <end position="210"/>
    </location>
</feature>
<feature type="active site" description="Proton acceptor" evidence="1">
    <location>
        <position position="85"/>
    </location>
</feature>
<feature type="site" description="Important for substrate specificity" evidence="1">
    <location>
        <position position="24"/>
    </location>
</feature>
<feature type="site" description="Important for substrate specificity" evidence="1">
    <location>
        <position position="86"/>
    </location>
</feature>
<feature type="site" description="Important for substrate specificity" evidence="1">
    <location>
        <position position="168"/>
    </location>
</feature>
<reference key="1">
    <citation type="journal article" date="2008" name="PLoS Genet.">
        <title>Complete genome sequence of the complex carbohydrate-degrading marine bacterium, Saccharophagus degradans strain 2-40 T.</title>
        <authorList>
            <person name="Weiner R.M."/>
            <person name="Taylor L.E. II"/>
            <person name="Henrissat B."/>
            <person name="Hauser L."/>
            <person name="Land M."/>
            <person name="Coutinho P.M."/>
            <person name="Rancurel C."/>
            <person name="Saunders E.H."/>
            <person name="Longmire A.G."/>
            <person name="Zhang H."/>
            <person name="Bayer E.A."/>
            <person name="Gilbert H.J."/>
            <person name="Larimer F."/>
            <person name="Zhulin I.B."/>
            <person name="Ekborg N.A."/>
            <person name="Lamed R."/>
            <person name="Richardson P.M."/>
            <person name="Borovok I."/>
            <person name="Hutcheson S."/>
        </authorList>
    </citation>
    <scope>NUCLEOTIDE SEQUENCE [LARGE SCALE GENOMIC DNA]</scope>
    <source>
        <strain>2-40 / ATCC 43961 / DSM 17024</strain>
    </source>
</reference>
<dbReference type="EC" id="3.6.1.9" evidence="1"/>
<dbReference type="EMBL" id="CP000282">
    <property type="protein sequence ID" value="ABD82446.1"/>
    <property type="molecule type" value="Genomic_DNA"/>
</dbReference>
<dbReference type="RefSeq" id="WP_011469662.1">
    <property type="nucleotide sequence ID" value="NC_007912.1"/>
</dbReference>
<dbReference type="SMR" id="Q21FT3"/>
<dbReference type="STRING" id="203122.Sde_3189"/>
<dbReference type="GeneID" id="98614816"/>
<dbReference type="KEGG" id="sde:Sde_3189"/>
<dbReference type="eggNOG" id="COG0424">
    <property type="taxonomic scope" value="Bacteria"/>
</dbReference>
<dbReference type="HOGENOM" id="CLU_040416_2_1_6"/>
<dbReference type="OrthoDB" id="9807767at2"/>
<dbReference type="Proteomes" id="UP000001947">
    <property type="component" value="Chromosome"/>
</dbReference>
<dbReference type="GO" id="GO:0005737">
    <property type="term" value="C:cytoplasm"/>
    <property type="evidence" value="ECO:0007669"/>
    <property type="project" value="UniProtKB-SubCell"/>
</dbReference>
<dbReference type="GO" id="GO:0036218">
    <property type="term" value="F:dTTP diphosphatase activity"/>
    <property type="evidence" value="ECO:0007669"/>
    <property type="project" value="RHEA"/>
</dbReference>
<dbReference type="GO" id="GO:0036221">
    <property type="term" value="F:UTP diphosphatase activity"/>
    <property type="evidence" value="ECO:0007669"/>
    <property type="project" value="RHEA"/>
</dbReference>
<dbReference type="GO" id="GO:0009117">
    <property type="term" value="P:nucleotide metabolic process"/>
    <property type="evidence" value="ECO:0007669"/>
    <property type="project" value="UniProtKB-KW"/>
</dbReference>
<dbReference type="CDD" id="cd00555">
    <property type="entry name" value="Maf"/>
    <property type="match status" value="1"/>
</dbReference>
<dbReference type="Gene3D" id="3.90.950.10">
    <property type="match status" value="1"/>
</dbReference>
<dbReference type="HAMAP" id="MF_00528">
    <property type="entry name" value="Maf"/>
    <property type="match status" value="1"/>
</dbReference>
<dbReference type="InterPro" id="IPR029001">
    <property type="entry name" value="ITPase-like_fam"/>
</dbReference>
<dbReference type="InterPro" id="IPR003697">
    <property type="entry name" value="Maf-like"/>
</dbReference>
<dbReference type="NCBIfam" id="TIGR00172">
    <property type="entry name" value="maf"/>
    <property type="match status" value="1"/>
</dbReference>
<dbReference type="PANTHER" id="PTHR43213">
    <property type="entry name" value="BIFUNCTIONAL DTTP/UTP PYROPHOSPHATASE/METHYLTRANSFERASE PROTEIN-RELATED"/>
    <property type="match status" value="1"/>
</dbReference>
<dbReference type="PANTHER" id="PTHR43213:SF5">
    <property type="entry name" value="BIFUNCTIONAL DTTP_UTP PYROPHOSPHATASE_METHYLTRANSFERASE PROTEIN-RELATED"/>
    <property type="match status" value="1"/>
</dbReference>
<dbReference type="Pfam" id="PF02545">
    <property type="entry name" value="Maf"/>
    <property type="match status" value="1"/>
</dbReference>
<dbReference type="PIRSF" id="PIRSF006305">
    <property type="entry name" value="Maf"/>
    <property type="match status" value="1"/>
</dbReference>
<dbReference type="SUPFAM" id="SSF52972">
    <property type="entry name" value="ITPase-like"/>
    <property type="match status" value="1"/>
</dbReference>
<keyword id="KW-0963">Cytoplasm</keyword>
<keyword id="KW-0378">Hydrolase</keyword>
<keyword id="KW-0546">Nucleotide metabolism</keyword>
<keyword id="KW-1185">Reference proteome</keyword>
<evidence type="ECO:0000255" key="1">
    <source>
        <dbReference type="HAMAP-Rule" id="MF_00528"/>
    </source>
</evidence>
<name>NTPPA_SACD2</name>
<accession>Q21FT3</accession>
<organism>
    <name type="scientific">Saccharophagus degradans (strain 2-40 / ATCC 43961 / DSM 17024)</name>
    <dbReference type="NCBI Taxonomy" id="203122"/>
    <lineage>
        <taxon>Bacteria</taxon>
        <taxon>Pseudomonadati</taxon>
        <taxon>Pseudomonadota</taxon>
        <taxon>Gammaproteobacteria</taxon>
        <taxon>Cellvibrionales</taxon>
        <taxon>Cellvibrionaceae</taxon>
        <taxon>Saccharophagus</taxon>
    </lineage>
</organism>
<comment type="function">
    <text evidence="1">Nucleoside triphosphate pyrophosphatase that hydrolyzes dTTP and UTP. May have a dual role in cell division arrest and in preventing the incorporation of modified nucleotides into cellular nucleic acids.</text>
</comment>
<comment type="catalytic activity">
    <reaction evidence="1">
        <text>dTTP + H2O = dTMP + diphosphate + H(+)</text>
        <dbReference type="Rhea" id="RHEA:28534"/>
        <dbReference type="ChEBI" id="CHEBI:15377"/>
        <dbReference type="ChEBI" id="CHEBI:15378"/>
        <dbReference type="ChEBI" id="CHEBI:33019"/>
        <dbReference type="ChEBI" id="CHEBI:37568"/>
        <dbReference type="ChEBI" id="CHEBI:63528"/>
        <dbReference type="EC" id="3.6.1.9"/>
    </reaction>
</comment>
<comment type="catalytic activity">
    <reaction evidence="1">
        <text>UTP + H2O = UMP + diphosphate + H(+)</text>
        <dbReference type="Rhea" id="RHEA:29395"/>
        <dbReference type="ChEBI" id="CHEBI:15377"/>
        <dbReference type="ChEBI" id="CHEBI:15378"/>
        <dbReference type="ChEBI" id="CHEBI:33019"/>
        <dbReference type="ChEBI" id="CHEBI:46398"/>
        <dbReference type="ChEBI" id="CHEBI:57865"/>
        <dbReference type="EC" id="3.6.1.9"/>
    </reaction>
</comment>
<comment type="cofactor">
    <cofactor evidence="1">
        <name>a divalent metal cation</name>
        <dbReference type="ChEBI" id="CHEBI:60240"/>
    </cofactor>
</comment>
<comment type="subcellular location">
    <subcellularLocation>
        <location evidence="1">Cytoplasm</location>
    </subcellularLocation>
</comment>
<comment type="similarity">
    <text evidence="1">Belongs to the Maf family. YhdE subfamily.</text>
</comment>
<proteinExistence type="inferred from homology"/>
<gene>
    <name type="ordered locus">Sde_3189</name>
</gene>
<protein>
    <recommendedName>
        <fullName evidence="1">dTTP/UTP pyrophosphatase</fullName>
        <shortName evidence="1">dTTPase/UTPase</shortName>
        <ecNumber evidence="1">3.6.1.9</ecNumber>
    </recommendedName>
    <alternativeName>
        <fullName evidence="1">Nucleoside triphosphate pyrophosphatase</fullName>
    </alternativeName>
    <alternativeName>
        <fullName evidence="1">Nucleotide pyrophosphatase</fullName>
        <shortName evidence="1">Nucleotide PPase</shortName>
    </alternativeName>
</protein>